<comment type="function">
    <text evidence="3">May be a substrate-recognition component of a SCF-like ECS (Elongin-Cullin-SOCS-box protein) E3 ubiquitin-protein ligase complex which mediates the ubiquitination and subsequent proteasomal degradation of target proteins. Plays a role in the inhibition of cardiomyocyte nuclear proliferation by mediating the ubiquitination and degradation of MAPRE2 (PubMed:38319584).</text>
</comment>
<comment type="pathway">
    <text>Protein modification; protein ubiquitination.</text>
</comment>
<comment type="subunit">
    <text evidence="3">Interacts with MAPRE2; this interaction promotes MAPRE2 degradation.</text>
</comment>
<comment type="alternative products">
    <event type="alternative splicing"/>
    <isoform>
        <id>Q8C6Y6-1</id>
        <name>1</name>
        <sequence type="displayed"/>
    </isoform>
    <isoform>
        <id>Q8C6Y6-2</id>
        <name>2</name>
        <sequence type="described" ref="VSP_036929 VSP_036930"/>
    </isoform>
</comment>
<comment type="domain">
    <text evidence="1">The SOCS box domain mediates the interaction with the Elongin BC complex, an adapter module in different E3 ubiquitin-protein ligase complexes.</text>
</comment>
<comment type="disruption phenotype">
    <text evidence="3">Asb14 silencing promotes cardiomyocyte nuclear proliferation after myocardial infarction in adult.</text>
</comment>
<comment type="similarity">
    <text evidence="5">Belongs to the ankyrin SOCS box (ASB) family.</text>
</comment>
<comment type="sequence caution" evidence="5">
    <conflict type="erroneous initiation">
        <sequence resource="EMBL-CDS" id="BAC35189"/>
    </conflict>
</comment>
<proteinExistence type="evidence at protein level"/>
<gene>
    <name type="primary">Asb14</name>
</gene>
<name>ASB14_MOUSE</name>
<sequence>MDPSGSDEDADADFDTQVIIQQSLLDVYKPGIAQHTPEAARLHSFPSDDYKKIAEAIETGKEDALAGFAKYHPAFDEANGNGWLPLHKAAVQLNKNILEITMNASEPSTWERTTHNGETALFLAVSSSLLENAHFLLLKGCNPNAKTSEGNSPLLTAVLKDAYDMATLLISHGADVNLRCANERTALHEAAKLGRLDMVKLMLASGAYPDARSSYGFTPLALAAQGGHTGIMQLLLQKGADVHSQASDSSSVLLEAVRGGNPEAVSLLLEYGADANIPKSSGHLPIHVAADKGHFLALKVLVPVTDIAAIKKSGISPVHCAAAGAHPHCLELLIQAGFDVNFMLDQRIRKHYDDQRKSALYFAVSNGDLPSVKLLLSAGALPNQDPVNCLQIALRMGNYELISLLLRHGANVNYFCRVNPLHFPSALQYTLKDEVMLRMLLNYGYDTERCFDCPHGERVHRFCTFEGWTSTVIKDTMFCEVITLSWLQHLSGKVVRVMLDYVDQVQICSKLKAVLEKQRLWPEIHFILANPRSLQHLCRLKIRKCMGRLRLRCPVFMSFLPLPNLLKAYVLYKEYDLFGQERSTGTW</sequence>
<accession>Q8C6Y6</accession>
<accession>B7ZN45</accession>
<accession>Q8VHS7</accession>
<reference key="1">
    <citation type="submission" date="2001-07" db="EMBL/GenBank/DDBJ databases">
        <title>SOCS box proteins.</title>
        <authorList>
            <person name="Kile B.T."/>
            <person name="Nicola N.A."/>
        </authorList>
    </citation>
    <scope>NUCLEOTIDE SEQUENCE [MRNA] (ISOFORM 2)</scope>
</reference>
<reference key="2">
    <citation type="journal article" date="2005" name="Science">
        <title>The transcriptional landscape of the mammalian genome.</title>
        <authorList>
            <person name="Carninci P."/>
            <person name="Kasukawa T."/>
            <person name="Katayama S."/>
            <person name="Gough J."/>
            <person name="Frith M.C."/>
            <person name="Maeda N."/>
            <person name="Oyama R."/>
            <person name="Ravasi T."/>
            <person name="Lenhard B."/>
            <person name="Wells C."/>
            <person name="Kodzius R."/>
            <person name="Shimokawa K."/>
            <person name="Bajic V.B."/>
            <person name="Brenner S.E."/>
            <person name="Batalov S."/>
            <person name="Forrest A.R."/>
            <person name="Zavolan M."/>
            <person name="Davis M.J."/>
            <person name="Wilming L.G."/>
            <person name="Aidinis V."/>
            <person name="Allen J.E."/>
            <person name="Ambesi-Impiombato A."/>
            <person name="Apweiler R."/>
            <person name="Aturaliya R.N."/>
            <person name="Bailey T.L."/>
            <person name="Bansal M."/>
            <person name="Baxter L."/>
            <person name="Beisel K.W."/>
            <person name="Bersano T."/>
            <person name="Bono H."/>
            <person name="Chalk A.M."/>
            <person name="Chiu K.P."/>
            <person name="Choudhary V."/>
            <person name="Christoffels A."/>
            <person name="Clutterbuck D.R."/>
            <person name="Crowe M.L."/>
            <person name="Dalla E."/>
            <person name="Dalrymple B.P."/>
            <person name="de Bono B."/>
            <person name="Della Gatta G."/>
            <person name="di Bernardo D."/>
            <person name="Down T."/>
            <person name="Engstrom P."/>
            <person name="Fagiolini M."/>
            <person name="Faulkner G."/>
            <person name="Fletcher C.F."/>
            <person name="Fukushima T."/>
            <person name="Furuno M."/>
            <person name="Futaki S."/>
            <person name="Gariboldi M."/>
            <person name="Georgii-Hemming P."/>
            <person name="Gingeras T.R."/>
            <person name="Gojobori T."/>
            <person name="Green R.E."/>
            <person name="Gustincich S."/>
            <person name="Harbers M."/>
            <person name="Hayashi Y."/>
            <person name="Hensch T.K."/>
            <person name="Hirokawa N."/>
            <person name="Hill D."/>
            <person name="Huminiecki L."/>
            <person name="Iacono M."/>
            <person name="Ikeo K."/>
            <person name="Iwama A."/>
            <person name="Ishikawa T."/>
            <person name="Jakt M."/>
            <person name="Kanapin A."/>
            <person name="Katoh M."/>
            <person name="Kawasawa Y."/>
            <person name="Kelso J."/>
            <person name="Kitamura H."/>
            <person name="Kitano H."/>
            <person name="Kollias G."/>
            <person name="Krishnan S.P."/>
            <person name="Kruger A."/>
            <person name="Kummerfeld S.K."/>
            <person name="Kurochkin I.V."/>
            <person name="Lareau L.F."/>
            <person name="Lazarevic D."/>
            <person name="Lipovich L."/>
            <person name="Liu J."/>
            <person name="Liuni S."/>
            <person name="McWilliam S."/>
            <person name="Madan Babu M."/>
            <person name="Madera M."/>
            <person name="Marchionni L."/>
            <person name="Matsuda H."/>
            <person name="Matsuzawa S."/>
            <person name="Miki H."/>
            <person name="Mignone F."/>
            <person name="Miyake S."/>
            <person name="Morris K."/>
            <person name="Mottagui-Tabar S."/>
            <person name="Mulder N."/>
            <person name="Nakano N."/>
            <person name="Nakauchi H."/>
            <person name="Ng P."/>
            <person name="Nilsson R."/>
            <person name="Nishiguchi S."/>
            <person name="Nishikawa S."/>
            <person name="Nori F."/>
            <person name="Ohara O."/>
            <person name="Okazaki Y."/>
            <person name="Orlando V."/>
            <person name="Pang K.C."/>
            <person name="Pavan W.J."/>
            <person name="Pavesi G."/>
            <person name="Pesole G."/>
            <person name="Petrovsky N."/>
            <person name="Piazza S."/>
            <person name="Reed J."/>
            <person name="Reid J.F."/>
            <person name="Ring B.Z."/>
            <person name="Ringwald M."/>
            <person name="Rost B."/>
            <person name="Ruan Y."/>
            <person name="Salzberg S.L."/>
            <person name="Sandelin A."/>
            <person name="Schneider C."/>
            <person name="Schoenbach C."/>
            <person name="Sekiguchi K."/>
            <person name="Semple C.A."/>
            <person name="Seno S."/>
            <person name="Sessa L."/>
            <person name="Sheng Y."/>
            <person name="Shibata Y."/>
            <person name="Shimada H."/>
            <person name="Shimada K."/>
            <person name="Silva D."/>
            <person name="Sinclair B."/>
            <person name="Sperling S."/>
            <person name="Stupka E."/>
            <person name="Sugiura K."/>
            <person name="Sultana R."/>
            <person name="Takenaka Y."/>
            <person name="Taki K."/>
            <person name="Tammoja K."/>
            <person name="Tan S.L."/>
            <person name="Tang S."/>
            <person name="Taylor M.S."/>
            <person name="Tegner J."/>
            <person name="Teichmann S.A."/>
            <person name="Ueda H.R."/>
            <person name="van Nimwegen E."/>
            <person name="Verardo R."/>
            <person name="Wei C.L."/>
            <person name="Yagi K."/>
            <person name="Yamanishi H."/>
            <person name="Zabarovsky E."/>
            <person name="Zhu S."/>
            <person name="Zimmer A."/>
            <person name="Hide W."/>
            <person name="Bult C."/>
            <person name="Grimmond S.M."/>
            <person name="Teasdale R.D."/>
            <person name="Liu E.T."/>
            <person name="Brusic V."/>
            <person name="Quackenbush J."/>
            <person name="Wahlestedt C."/>
            <person name="Mattick J.S."/>
            <person name="Hume D.A."/>
            <person name="Kai C."/>
            <person name="Sasaki D."/>
            <person name="Tomaru Y."/>
            <person name="Fukuda S."/>
            <person name="Kanamori-Katayama M."/>
            <person name="Suzuki M."/>
            <person name="Aoki J."/>
            <person name="Arakawa T."/>
            <person name="Iida J."/>
            <person name="Imamura K."/>
            <person name="Itoh M."/>
            <person name="Kato T."/>
            <person name="Kawaji H."/>
            <person name="Kawagashira N."/>
            <person name="Kawashima T."/>
            <person name="Kojima M."/>
            <person name="Kondo S."/>
            <person name="Konno H."/>
            <person name="Nakano K."/>
            <person name="Ninomiya N."/>
            <person name="Nishio T."/>
            <person name="Okada M."/>
            <person name="Plessy C."/>
            <person name="Shibata K."/>
            <person name="Shiraki T."/>
            <person name="Suzuki S."/>
            <person name="Tagami M."/>
            <person name="Waki K."/>
            <person name="Watahiki A."/>
            <person name="Okamura-Oho Y."/>
            <person name="Suzuki H."/>
            <person name="Kawai J."/>
            <person name="Hayashizaki Y."/>
        </authorList>
    </citation>
    <scope>NUCLEOTIDE SEQUENCE [LARGE SCALE MRNA] (ISOFORM 1)</scope>
    <source>
        <strain>C57BL/6J</strain>
        <tissue>Heart</tissue>
    </source>
</reference>
<reference key="3">
    <citation type="journal article" date="2009" name="PLoS Biol.">
        <title>Lineage-specific biology revealed by a finished genome assembly of the mouse.</title>
        <authorList>
            <person name="Church D.M."/>
            <person name="Goodstadt L."/>
            <person name="Hillier L.W."/>
            <person name="Zody M.C."/>
            <person name="Goldstein S."/>
            <person name="She X."/>
            <person name="Bult C.J."/>
            <person name="Agarwala R."/>
            <person name="Cherry J.L."/>
            <person name="DiCuccio M."/>
            <person name="Hlavina W."/>
            <person name="Kapustin Y."/>
            <person name="Meric P."/>
            <person name="Maglott D."/>
            <person name="Birtle Z."/>
            <person name="Marques A.C."/>
            <person name="Graves T."/>
            <person name="Zhou S."/>
            <person name="Teague B."/>
            <person name="Potamousis K."/>
            <person name="Churas C."/>
            <person name="Place M."/>
            <person name="Herschleb J."/>
            <person name="Runnheim R."/>
            <person name="Forrest D."/>
            <person name="Amos-Landgraf J."/>
            <person name="Schwartz D.C."/>
            <person name="Cheng Z."/>
            <person name="Lindblad-Toh K."/>
            <person name="Eichler E.E."/>
            <person name="Ponting C.P."/>
        </authorList>
    </citation>
    <scope>NUCLEOTIDE SEQUENCE [LARGE SCALE GENOMIC DNA]</scope>
    <source>
        <strain>C57BL/6J</strain>
    </source>
</reference>
<reference key="4">
    <citation type="journal article" date="2004" name="Genome Res.">
        <title>The status, quality, and expansion of the NIH full-length cDNA project: the Mammalian Gene Collection (MGC).</title>
        <authorList>
            <consortium name="The MGC Project Team"/>
        </authorList>
    </citation>
    <scope>NUCLEOTIDE SEQUENCE [LARGE SCALE MRNA] OF 158-587 (ISOFORM 1)</scope>
    <source>
        <tissue>Brain</tissue>
    </source>
</reference>
<reference key="5">
    <citation type="journal article" date="2024" name="Cell Biochem. Biophys.">
        <title>E3 Ubiquitin Ligase ASB14 Inhibits Cardiomyocyte Proliferation by Regulating MAPRE2 Ubiquitination.</title>
        <authorList>
            <person name="Yang Y."/>
            <person name="Ma D."/>
            <person name="Liu B."/>
            <person name="Sun X."/>
            <person name="Fu W."/>
            <person name="Lv F."/>
            <person name="Qiu C."/>
        </authorList>
    </citation>
    <scope>FUNCTION</scope>
    <scope>INTERACTION WITH MAPRE2</scope>
    <scope>DISRUPTION PHENOTYPE</scope>
</reference>
<organism>
    <name type="scientific">Mus musculus</name>
    <name type="common">Mouse</name>
    <dbReference type="NCBI Taxonomy" id="10090"/>
    <lineage>
        <taxon>Eukaryota</taxon>
        <taxon>Metazoa</taxon>
        <taxon>Chordata</taxon>
        <taxon>Craniata</taxon>
        <taxon>Vertebrata</taxon>
        <taxon>Euteleostomi</taxon>
        <taxon>Mammalia</taxon>
        <taxon>Eutheria</taxon>
        <taxon>Euarchontoglires</taxon>
        <taxon>Glires</taxon>
        <taxon>Rodentia</taxon>
        <taxon>Myomorpha</taxon>
        <taxon>Muroidea</taxon>
        <taxon>Muridae</taxon>
        <taxon>Murinae</taxon>
        <taxon>Mus</taxon>
        <taxon>Mus</taxon>
    </lineage>
</organism>
<keyword id="KW-0025">Alternative splicing</keyword>
<keyword id="KW-0040">ANK repeat</keyword>
<keyword id="KW-1185">Reference proteome</keyword>
<keyword id="KW-0677">Repeat</keyword>
<evidence type="ECO:0000250" key="1"/>
<evidence type="ECO:0000255" key="2">
    <source>
        <dbReference type="PROSITE-ProRule" id="PRU00194"/>
    </source>
</evidence>
<evidence type="ECO:0000269" key="3">
    <source>
    </source>
</evidence>
<evidence type="ECO:0000303" key="4">
    <source ref="1"/>
</evidence>
<evidence type="ECO:0000305" key="5"/>
<protein>
    <recommendedName>
        <fullName>Ankyrin repeat and SOCS box protein 14</fullName>
    </recommendedName>
</protein>
<dbReference type="EMBL" id="AF403042">
    <property type="protein sequence ID" value="AAL57361.1"/>
    <property type="molecule type" value="mRNA"/>
</dbReference>
<dbReference type="EMBL" id="AK052884">
    <property type="protein sequence ID" value="BAC35189.1"/>
    <property type="status" value="ALT_INIT"/>
    <property type="molecule type" value="mRNA"/>
</dbReference>
<dbReference type="EMBL" id="AC133179">
    <property type="status" value="NOT_ANNOTATED_CDS"/>
    <property type="molecule type" value="Genomic_DNA"/>
</dbReference>
<dbReference type="EMBL" id="AC124603">
    <property type="status" value="NOT_ANNOTATED_CDS"/>
    <property type="molecule type" value="Genomic_DNA"/>
</dbReference>
<dbReference type="EMBL" id="BC145002">
    <property type="protein sequence ID" value="AAI45003.1"/>
    <property type="molecule type" value="mRNA"/>
</dbReference>
<dbReference type="CCDS" id="CCDS49431.2">
    <molecule id="Q8C6Y6-1"/>
</dbReference>
<dbReference type="RefSeq" id="NP_001164219.1">
    <property type="nucleotide sequence ID" value="NM_001170748.1"/>
</dbReference>
<dbReference type="RefSeq" id="NP_543132.3">
    <property type="nucleotide sequence ID" value="NM_080856.4"/>
</dbReference>
<dbReference type="SMR" id="Q8C6Y6"/>
<dbReference type="FunCoup" id="Q8C6Y6">
    <property type="interactions" value="36"/>
</dbReference>
<dbReference type="STRING" id="10090.ENSMUSP00000087810"/>
<dbReference type="iPTMnet" id="Q8C6Y6"/>
<dbReference type="PhosphoSitePlus" id="Q8C6Y6"/>
<dbReference type="PaxDb" id="10090-ENSMUSP00000087810"/>
<dbReference type="ProteomicsDB" id="283181">
    <molecule id="Q8C6Y6-1"/>
</dbReference>
<dbReference type="ProteomicsDB" id="283182">
    <molecule id="Q8C6Y6-2"/>
</dbReference>
<dbReference type="DNASU" id="142687"/>
<dbReference type="GeneID" id="142687"/>
<dbReference type="KEGG" id="mmu:142687"/>
<dbReference type="AGR" id="MGI:2655107"/>
<dbReference type="CTD" id="142686"/>
<dbReference type="MGI" id="MGI:2655107">
    <property type="gene designation" value="Asb14"/>
</dbReference>
<dbReference type="eggNOG" id="KOG0504">
    <property type="taxonomic scope" value="Eukaryota"/>
</dbReference>
<dbReference type="InParanoid" id="Q8C6Y6"/>
<dbReference type="OrthoDB" id="194358at2759"/>
<dbReference type="Reactome" id="R-MMU-8951664">
    <property type="pathway name" value="Neddylation"/>
</dbReference>
<dbReference type="Reactome" id="R-MMU-983168">
    <property type="pathway name" value="Antigen processing: Ubiquitination &amp; Proteasome degradation"/>
</dbReference>
<dbReference type="UniPathway" id="UPA00143"/>
<dbReference type="BioGRID-ORCS" id="142687">
    <property type="hits" value="6 hits in 78 CRISPR screens"/>
</dbReference>
<dbReference type="PRO" id="PR:Q8C6Y6"/>
<dbReference type="Proteomes" id="UP000000589">
    <property type="component" value="Unplaced"/>
</dbReference>
<dbReference type="RNAct" id="Q8C6Y6">
    <property type="molecule type" value="protein"/>
</dbReference>
<dbReference type="GO" id="GO:0035556">
    <property type="term" value="P:intracellular signal transduction"/>
    <property type="evidence" value="ECO:0007669"/>
    <property type="project" value="InterPro"/>
</dbReference>
<dbReference type="GO" id="GO:0016567">
    <property type="term" value="P:protein ubiquitination"/>
    <property type="evidence" value="ECO:0007669"/>
    <property type="project" value="UniProtKB-UniPathway"/>
</dbReference>
<dbReference type="FunFam" id="1.10.750.20:FF:000001">
    <property type="entry name" value="Ankyrin repeat and SOCS box containing 1"/>
    <property type="match status" value="1"/>
</dbReference>
<dbReference type="Gene3D" id="1.25.40.20">
    <property type="entry name" value="Ankyrin repeat-containing domain"/>
    <property type="match status" value="4"/>
</dbReference>
<dbReference type="Gene3D" id="1.10.750.20">
    <property type="entry name" value="SOCS box"/>
    <property type="match status" value="1"/>
</dbReference>
<dbReference type="InterPro" id="IPR002110">
    <property type="entry name" value="Ankyrin_rpt"/>
</dbReference>
<dbReference type="InterPro" id="IPR036770">
    <property type="entry name" value="Ankyrin_rpt-contain_sf"/>
</dbReference>
<dbReference type="InterPro" id="IPR050889">
    <property type="entry name" value="Dendritic_Spine_Reg/Scaffold"/>
</dbReference>
<dbReference type="InterPro" id="IPR001496">
    <property type="entry name" value="SOCS_box"/>
</dbReference>
<dbReference type="InterPro" id="IPR036036">
    <property type="entry name" value="SOCS_box-like_dom_sf"/>
</dbReference>
<dbReference type="PANTHER" id="PTHR24166:SF48">
    <property type="entry name" value="PROTEIN VAPYRIN"/>
    <property type="match status" value="1"/>
</dbReference>
<dbReference type="PANTHER" id="PTHR24166">
    <property type="entry name" value="ROLLING PEBBLES, ISOFORM B"/>
    <property type="match status" value="1"/>
</dbReference>
<dbReference type="Pfam" id="PF12796">
    <property type="entry name" value="Ank_2"/>
    <property type="match status" value="4"/>
</dbReference>
<dbReference type="Pfam" id="PF07525">
    <property type="entry name" value="SOCS_box"/>
    <property type="match status" value="1"/>
</dbReference>
<dbReference type="PRINTS" id="PR01415">
    <property type="entry name" value="ANKYRIN"/>
</dbReference>
<dbReference type="SMART" id="SM00248">
    <property type="entry name" value="ANK"/>
    <property type="match status" value="11"/>
</dbReference>
<dbReference type="SMART" id="SM00253">
    <property type="entry name" value="SOCS"/>
    <property type="match status" value="1"/>
</dbReference>
<dbReference type="SMART" id="SM00969">
    <property type="entry name" value="SOCS_box"/>
    <property type="match status" value="1"/>
</dbReference>
<dbReference type="SUPFAM" id="SSF48403">
    <property type="entry name" value="Ankyrin repeat"/>
    <property type="match status" value="2"/>
</dbReference>
<dbReference type="SUPFAM" id="SSF158235">
    <property type="entry name" value="SOCS box-like"/>
    <property type="match status" value="1"/>
</dbReference>
<dbReference type="PROSITE" id="PS50297">
    <property type="entry name" value="ANK_REP_REGION"/>
    <property type="match status" value="1"/>
</dbReference>
<dbReference type="PROSITE" id="PS50088">
    <property type="entry name" value="ANK_REPEAT"/>
    <property type="match status" value="8"/>
</dbReference>
<dbReference type="PROSITE" id="PS50225">
    <property type="entry name" value="SOCS"/>
    <property type="match status" value="1"/>
</dbReference>
<feature type="chain" id="PRO_0000370366" description="Ankyrin repeat and SOCS box protein 14">
    <location>
        <begin position="1"/>
        <end position="587"/>
    </location>
</feature>
<feature type="repeat" description="ANK 1">
    <location>
        <begin position="81"/>
        <end position="110"/>
    </location>
</feature>
<feature type="repeat" description="ANK 2">
    <location>
        <begin position="116"/>
        <end position="145"/>
    </location>
</feature>
<feature type="repeat" description="ANK 3">
    <location>
        <begin position="149"/>
        <end position="178"/>
    </location>
</feature>
<feature type="repeat" description="ANK 4">
    <location>
        <begin position="182"/>
        <end position="211"/>
    </location>
</feature>
<feature type="repeat" description="ANK 5">
    <location>
        <begin position="215"/>
        <end position="244"/>
    </location>
</feature>
<feature type="repeat" description="ANK 6">
    <location>
        <begin position="248"/>
        <end position="277"/>
    </location>
</feature>
<feature type="repeat" description="ANK 7">
    <location>
        <begin position="281"/>
        <end position="310"/>
    </location>
</feature>
<feature type="repeat" description="ANK 8">
    <location>
        <begin position="313"/>
        <end position="342"/>
    </location>
</feature>
<feature type="repeat" description="ANK 9">
    <location>
        <begin position="355"/>
        <end position="384"/>
    </location>
</feature>
<feature type="repeat" description="ANK 10">
    <location>
        <begin position="385"/>
        <end position="414"/>
    </location>
</feature>
<feature type="repeat" description="ANK 11">
    <location>
        <begin position="416"/>
        <end position="449"/>
    </location>
</feature>
<feature type="domain" description="SOCS box" evidence="2">
    <location>
        <begin position="521"/>
        <end position="576"/>
    </location>
</feature>
<feature type="splice variant" id="VSP_036929" description="In isoform 2." evidence="4">
    <location>
        <begin position="1"/>
        <end position="164"/>
    </location>
</feature>
<feature type="splice variant" id="VSP_036930" description="In isoform 2." evidence="4">
    <original>G</original>
    <variation>GKAYLMVDYRG</variation>
    <location>
        <position position="239"/>
    </location>
</feature>
<feature type="sequence conflict" description="In Ref. 1; AAL57361." evidence="5" ref="1">
    <original>I</original>
    <variation>V</variation>
    <location>
        <position position="310"/>
    </location>
</feature>
<feature type="sequence conflict" description="In Ref. 2; BAC35189." evidence="5" ref="2">
    <original>ANPRSLQHLCRLKIRKCMGRLRLRCPVFMSFLPLPNLLKAYVLYKEYDLFGQERSTGTW</original>
    <variation>SEYRSHRKFLPKH</variation>
    <location>
        <begin position="529"/>
        <end position="587"/>
    </location>
</feature>
<feature type="sequence conflict" description="In Ref. 1; AAL57361 and 4; AAI45003." evidence="5" ref="1 4">
    <original>A</original>
    <variation>T</variation>
    <location>
        <position position="529"/>
    </location>
</feature>